<name>DNAJ_YERPY</name>
<sequence>MAKRDYYEVLGVSRDAEEREIKKAYKRLAMKFHPDRQSEDKNAEEKFKEAKEAYEILTDAQKRAAYDQYGHAAFEQGGMGGGGFGGGGGGADFSDIFGDVFGDIFGGGRRQQRASRGSDLRYNMDLTLEEAVRGVTKEIRIPTLDECDVCHGSGAKPGSSPVTCPTCHGAGQVQMRQGFFTVQQACPHCHGRGQIIKDPCNKCHGHGRVEKSKTLSVKIPAGVDTGDRIRLSGEGEAGEHGAPSGDLYVQVQVKAHPIFEREGNNLYCEVPINFAMAALGGEIEVPTLDGRVKLKIPAETQTGKMFRMRGKGVKSVRGGSQGDLLCRVVVETPVSLSEKQKQLLRELEESFVGAAGEKNSPRAKSFLDGVKKFFDDLTR</sequence>
<proteinExistence type="inferred from homology"/>
<keyword id="KW-0143">Chaperone</keyword>
<keyword id="KW-0963">Cytoplasm</keyword>
<keyword id="KW-0235">DNA replication</keyword>
<keyword id="KW-0479">Metal-binding</keyword>
<keyword id="KW-0677">Repeat</keyword>
<keyword id="KW-0346">Stress response</keyword>
<keyword id="KW-0862">Zinc</keyword>
<keyword id="KW-0863">Zinc-finger</keyword>
<dbReference type="EMBL" id="CP000950">
    <property type="protein sequence ID" value="ACA69860.1"/>
    <property type="molecule type" value="Genomic_DNA"/>
</dbReference>
<dbReference type="RefSeq" id="WP_002209249.1">
    <property type="nucleotide sequence ID" value="NZ_CP009792.1"/>
</dbReference>
<dbReference type="SMR" id="B1JL03"/>
<dbReference type="GeneID" id="57974140"/>
<dbReference type="KEGG" id="ypy:YPK_3593"/>
<dbReference type="PATRIC" id="fig|502800.11.peg.4342"/>
<dbReference type="GO" id="GO:0005737">
    <property type="term" value="C:cytoplasm"/>
    <property type="evidence" value="ECO:0007669"/>
    <property type="project" value="UniProtKB-SubCell"/>
</dbReference>
<dbReference type="GO" id="GO:0005524">
    <property type="term" value="F:ATP binding"/>
    <property type="evidence" value="ECO:0007669"/>
    <property type="project" value="InterPro"/>
</dbReference>
<dbReference type="GO" id="GO:0031072">
    <property type="term" value="F:heat shock protein binding"/>
    <property type="evidence" value="ECO:0007669"/>
    <property type="project" value="InterPro"/>
</dbReference>
<dbReference type="GO" id="GO:0051082">
    <property type="term" value="F:unfolded protein binding"/>
    <property type="evidence" value="ECO:0007669"/>
    <property type="project" value="UniProtKB-UniRule"/>
</dbReference>
<dbReference type="GO" id="GO:0008270">
    <property type="term" value="F:zinc ion binding"/>
    <property type="evidence" value="ECO:0007669"/>
    <property type="project" value="UniProtKB-UniRule"/>
</dbReference>
<dbReference type="GO" id="GO:0051085">
    <property type="term" value="P:chaperone cofactor-dependent protein refolding"/>
    <property type="evidence" value="ECO:0007669"/>
    <property type="project" value="TreeGrafter"/>
</dbReference>
<dbReference type="GO" id="GO:0006260">
    <property type="term" value="P:DNA replication"/>
    <property type="evidence" value="ECO:0007669"/>
    <property type="project" value="UniProtKB-KW"/>
</dbReference>
<dbReference type="GO" id="GO:0042026">
    <property type="term" value="P:protein refolding"/>
    <property type="evidence" value="ECO:0007669"/>
    <property type="project" value="TreeGrafter"/>
</dbReference>
<dbReference type="GO" id="GO:0009408">
    <property type="term" value="P:response to heat"/>
    <property type="evidence" value="ECO:0007669"/>
    <property type="project" value="InterPro"/>
</dbReference>
<dbReference type="CDD" id="cd06257">
    <property type="entry name" value="DnaJ"/>
    <property type="match status" value="1"/>
</dbReference>
<dbReference type="CDD" id="cd10747">
    <property type="entry name" value="DnaJ_C"/>
    <property type="match status" value="1"/>
</dbReference>
<dbReference type="CDD" id="cd10719">
    <property type="entry name" value="DnaJ_zf"/>
    <property type="match status" value="1"/>
</dbReference>
<dbReference type="FunFam" id="1.10.287.110:FF:000003">
    <property type="entry name" value="Molecular chaperone DnaJ"/>
    <property type="match status" value="1"/>
</dbReference>
<dbReference type="FunFam" id="2.10.230.10:FF:000002">
    <property type="entry name" value="Molecular chaperone DnaJ"/>
    <property type="match status" value="1"/>
</dbReference>
<dbReference type="FunFam" id="2.60.260.20:FF:000004">
    <property type="entry name" value="Molecular chaperone DnaJ"/>
    <property type="match status" value="1"/>
</dbReference>
<dbReference type="Gene3D" id="1.10.287.110">
    <property type="entry name" value="DnaJ domain"/>
    <property type="match status" value="1"/>
</dbReference>
<dbReference type="Gene3D" id="2.10.230.10">
    <property type="entry name" value="Heat shock protein DnaJ, cysteine-rich domain"/>
    <property type="match status" value="1"/>
</dbReference>
<dbReference type="Gene3D" id="2.60.260.20">
    <property type="entry name" value="Urease metallochaperone UreE, N-terminal domain"/>
    <property type="match status" value="2"/>
</dbReference>
<dbReference type="HAMAP" id="MF_01152">
    <property type="entry name" value="DnaJ"/>
    <property type="match status" value="1"/>
</dbReference>
<dbReference type="InterPro" id="IPR012724">
    <property type="entry name" value="DnaJ"/>
</dbReference>
<dbReference type="InterPro" id="IPR002939">
    <property type="entry name" value="DnaJ_C"/>
</dbReference>
<dbReference type="InterPro" id="IPR001623">
    <property type="entry name" value="DnaJ_domain"/>
</dbReference>
<dbReference type="InterPro" id="IPR018253">
    <property type="entry name" value="DnaJ_domain_CS"/>
</dbReference>
<dbReference type="InterPro" id="IPR008971">
    <property type="entry name" value="HSP40/DnaJ_pept-bd"/>
</dbReference>
<dbReference type="InterPro" id="IPR001305">
    <property type="entry name" value="HSP_DnaJ_Cys-rich_dom"/>
</dbReference>
<dbReference type="InterPro" id="IPR036410">
    <property type="entry name" value="HSP_DnaJ_Cys-rich_dom_sf"/>
</dbReference>
<dbReference type="InterPro" id="IPR036869">
    <property type="entry name" value="J_dom_sf"/>
</dbReference>
<dbReference type="NCBIfam" id="TIGR02349">
    <property type="entry name" value="DnaJ_bact"/>
    <property type="match status" value="1"/>
</dbReference>
<dbReference type="NCBIfam" id="NF008035">
    <property type="entry name" value="PRK10767.1"/>
    <property type="match status" value="1"/>
</dbReference>
<dbReference type="PANTHER" id="PTHR43096:SF48">
    <property type="entry name" value="CHAPERONE PROTEIN DNAJ"/>
    <property type="match status" value="1"/>
</dbReference>
<dbReference type="PANTHER" id="PTHR43096">
    <property type="entry name" value="DNAJ HOMOLOG 1, MITOCHONDRIAL-RELATED"/>
    <property type="match status" value="1"/>
</dbReference>
<dbReference type="Pfam" id="PF00226">
    <property type="entry name" value="DnaJ"/>
    <property type="match status" value="1"/>
</dbReference>
<dbReference type="Pfam" id="PF01556">
    <property type="entry name" value="DnaJ_C"/>
    <property type="match status" value="1"/>
</dbReference>
<dbReference type="Pfam" id="PF00684">
    <property type="entry name" value="DnaJ_CXXCXGXG"/>
    <property type="match status" value="1"/>
</dbReference>
<dbReference type="PRINTS" id="PR00625">
    <property type="entry name" value="JDOMAIN"/>
</dbReference>
<dbReference type="SMART" id="SM00271">
    <property type="entry name" value="DnaJ"/>
    <property type="match status" value="1"/>
</dbReference>
<dbReference type="SUPFAM" id="SSF46565">
    <property type="entry name" value="Chaperone J-domain"/>
    <property type="match status" value="1"/>
</dbReference>
<dbReference type="SUPFAM" id="SSF57938">
    <property type="entry name" value="DnaJ/Hsp40 cysteine-rich domain"/>
    <property type="match status" value="1"/>
</dbReference>
<dbReference type="SUPFAM" id="SSF49493">
    <property type="entry name" value="HSP40/DnaJ peptide-binding domain"/>
    <property type="match status" value="2"/>
</dbReference>
<dbReference type="PROSITE" id="PS00636">
    <property type="entry name" value="DNAJ_1"/>
    <property type="match status" value="1"/>
</dbReference>
<dbReference type="PROSITE" id="PS50076">
    <property type="entry name" value="DNAJ_2"/>
    <property type="match status" value="1"/>
</dbReference>
<dbReference type="PROSITE" id="PS51188">
    <property type="entry name" value="ZF_CR"/>
    <property type="match status" value="1"/>
</dbReference>
<protein>
    <recommendedName>
        <fullName evidence="1">Chaperone protein DnaJ</fullName>
    </recommendedName>
</protein>
<feature type="chain" id="PRO_1000137744" description="Chaperone protein DnaJ">
    <location>
        <begin position="1"/>
        <end position="379"/>
    </location>
</feature>
<feature type="domain" description="J" evidence="1">
    <location>
        <begin position="5"/>
        <end position="70"/>
    </location>
</feature>
<feature type="repeat" description="CXXCXGXG motif">
    <location>
        <begin position="147"/>
        <end position="154"/>
    </location>
</feature>
<feature type="repeat" description="CXXCXGXG motif">
    <location>
        <begin position="164"/>
        <end position="171"/>
    </location>
</feature>
<feature type="repeat" description="CXXCXGXG motif">
    <location>
        <begin position="186"/>
        <end position="193"/>
    </location>
</feature>
<feature type="repeat" description="CXXCXGXG motif">
    <location>
        <begin position="200"/>
        <end position="207"/>
    </location>
</feature>
<feature type="zinc finger region" description="CR-type" evidence="1">
    <location>
        <begin position="134"/>
        <end position="212"/>
    </location>
</feature>
<feature type="binding site" evidence="1">
    <location>
        <position position="147"/>
    </location>
    <ligand>
        <name>Zn(2+)</name>
        <dbReference type="ChEBI" id="CHEBI:29105"/>
        <label>1</label>
    </ligand>
</feature>
<feature type="binding site" evidence="1">
    <location>
        <position position="150"/>
    </location>
    <ligand>
        <name>Zn(2+)</name>
        <dbReference type="ChEBI" id="CHEBI:29105"/>
        <label>1</label>
    </ligand>
</feature>
<feature type="binding site" evidence="1">
    <location>
        <position position="164"/>
    </location>
    <ligand>
        <name>Zn(2+)</name>
        <dbReference type="ChEBI" id="CHEBI:29105"/>
        <label>2</label>
    </ligand>
</feature>
<feature type="binding site" evidence="1">
    <location>
        <position position="167"/>
    </location>
    <ligand>
        <name>Zn(2+)</name>
        <dbReference type="ChEBI" id="CHEBI:29105"/>
        <label>2</label>
    </ligand>
</feature>
<feature type="binding site" evidence="1">
    <location>
        <position position="186"/>
    </location>
    <ligand>
        <name>Zn(2+)</name>
        <dbReference type="ChEBI" id="CHEBI:29105"/>
        <label>2</label>
    </ligand>
</feature>
<feature type="binding site" evidence="1">
    <location>
        <position position="189"/>
    </location>
    <ligand>
        <name>Zn(2+)</name>
        <dbReference type="ChEBI" id="CHEBI:29105"/>
        <label>2</label>
    </ligand>
</feature>
<feature type="binding site" evidence="1">
    <location>
        <position position="200"/>
    </location>
    <ligand>
        <name>Zn(2+)</name>
        <dbReference type="ChEBI" id="CHEBI:29105"/>
        <label>1</label>
    </ligand>
</feature>
<feature type="binding site" evidence="1">
    <location>
        <position position="203"/>
    </location>
    <ligand>
        <name>Zn(2+)</name>
        <dbReference type="ChEBI" id="CHEBI:29105"/>
        <label>1</label>
    </ligand>
</feature>
<accession>B1JL03</accession>
<reference key="1">
    <citation type="submission" date="2008-02" db="EMBL/GenBank/DDBJ databases">
        <title>Complete sequence of Yersinia pseudotuberculosis YPIII.</title>
        <authorList>
            <consortium name="US DOE Joint Genome Institute"/>
            <person name="Copeland A."/>
            <person name="Lucas S."/>
            <person name="Lapidus A."/>
            <person name="Glavina del Rio T."/>
            <person name="Dalin E."/>
            <person name="Tice H."/>
            <person name="Bruce D."/>
            <person name="Goodwin L."/>
            <person name="Pitluck S."/>
            <person name="Munk A.C."/>
            <person name="Brettin T."/>
            <person name="Detter J.C."/>
            <person name="Han C."/>
            <person name="Tapia R."/>
            <person name="Schmutz J."/>
            <person name="Larimer F."/>
            <person name="Land M."/>
            <person name="Hauser L."/>
            <person name="Challacombe J.F."/>
            <person name="Green L."/>
            <person name="Lindler L.E."/>
            <person name="Nikolich M.P."/>
            <person name="Richardson P."/>
        </authorList>
    </citation>
    <scope>NUCLEOTIDE SEQUENCE [LARGE SCALE GENOMIC DNA]</scope>
    <source>
        <strain>YPIII</strain>
    </source>
</reference>
<organism>
    <name type="scientific">Yersinia pseudotuberculosis serotype O:3 (strain YPIII)</name>
    <dbReference type="NCBI Taxonomy" id="502800"/>
    <lineage>
        <taxon>Bacteria</taxon>
        <taxon>Pseudomonadati</taxon>
        <taxon>Pseudomonadota</taxon>
        <taxon>Gammaproteobacteria</taxon>
        <taxon>Enterobacterales</taxon>
        <taxon>Yersiniaceae</taxon>
        <taxon>Yersinia</taxon>
    </lineage>
</organism>
<gene>
    <name evidence="1" type="primary">dnaJ</name>
    <name type="ordered locus">YPK_3593</name>
</gene>
<evidence type="ECO:0000255" key="1">
    <source>
        <dbReference type="HAMAP-Rule" id="MF_01152"/>
    </source>
</evidence>
<comment type="function">
    <text evidence="1">Participates actively in the response to hyperosmotic and heat shock by preventing the aggregation of stress-denatured proteins and by disaggregating proteins, also in an autonomous, DnaK-independent fashion. Unfolded proteins bind initially to DnaJ; upon interaction with the DnaJ-bound protein, DnaK hydrolyzes its bound ATP, resulting in the formation of a stable complex. GrpE releases ADP from DnaK; ATP binding to DnaK triggers the release of the substrate protein, thus completing the reaction cycle. Several rounds of ATP-dependent interactions between DnaJ, DnaK and GrpE are required for fully efficient folding. Also involved, together with DnaK and GrpE, in the DNA replication of plasmids through activation of initiation proteins.</text>
</comment>
<comment type="cofactor">
    <cofactor evidence="1">
        <name>Zn(2+)</name>
        <dbReference type="ChEBI" id="CHEBI:29105"/>
    </cofactor>
    <text evidence="1">Binds 2 Zn(2+) ions per monomer.</text>
</comment>
<comment type="subunit">
    <text evidence="1">Homodimer.</text>
</comment>
<comment type="subcellular location">
    <subcellularLocation>
        <location evidence="1">Cytoplasm</location>
    </subcellularLocation>
</comment>
<comment type="domain">
    <text evidence="1">The J domain is necessary and sufficient to stimulate DnaK ATPase activity. Zinc center 1 plays an important role in the autonomous, DnaK-independent chaperone activity of DnaJ. Zinc center 2 is essential for interaction with DnaK and for DnaJ activity.</text>
</comment>
<comment type="similarity">
    <text evidence="1">Belongs to the DnaJ family.</text>
</comment>